<protein>
    <recommendedName>
        <fullName evidence="1">Phosphoenolpyruvate carboxylase</fullName>
        <shortName evidence="1">PEPC</shortName>
        <shortName evidence="1">PEPCase</shortName>
        <ecNumber evidence="1">4.1.1.31</ecNumber>
    </recommendedName>
</protein>
<evidence type="ECO:0000255" key="1">
    <source>
        <dbReference type="HAMAP-Rule" id="MF_00595"/>
    </source>
</evidence>
<comment type="function">
    <text evidence="1">Forms oxaloacetate, a four-carbon dicarboxylic acid source for the tricarboxylic acid cycle.</text>
</comment>
<comment type="catalytic activity">
    <reaction evidence="1">
        <text>oxaloacetate + phosphate = phosphoenolpyruvate + hydrogencarbonate</text>
        <dbReference type="Rhea" id="RHEA:28370"/>
        <dbReference type="ChEBI" id="CHEBI:16452"/>
        <dbReference type="ChEBI" id="CHEBI:17544"/>
        <dbReference type="ChEBI" id="CHEBI:43474"/>
        <dbReference type="ChEBI" id="CHEBI:58702"/>
        <dbReference type="EC" id="4.1.1.31"/>
    </reaction>
</comment>
<comment type="cofactor">
    <cofactor evidence="1">
        <name>Mg(2+)</name>
        <dbReference type="ChEBI" id="CHEBI:18420"/>
    </cofactor>
</comment>
<comment type="similarity">
    <text evidence="1">Belongs to the PEPCase type 1 family.</text>
</comment>
<reference key="1">
    <citation type="journal article" date="2007" name="PLoS Genet.">
        <title>Patterns and implications of gene gain and loss in the evolution of Prochlorococcus.</title>
        <authorList>
            <person name="Kettler G.C."/>
            <person name="Martiny A.C."/>
            <person name="Huang K."/>
            <person name="Zucker J."/>
            <person name="Coleman M.L."/>
            <person name="Rodrigue S."/>
            <person name="Chen F."/>
            <person name="Lapidus A."/>
            <person name="Ferriera S."/>
            <person name="Johnson J."/>
            <person name="Steglich C."/>
            <person name="Church G.M."/>
            <person name="Richardson P."/>
            <person name="Chisholm S.W."/>
        </authorList>
    </citation>
    <scope>NUCLEOTIDE SEQUENCE [LARGE SCALE GENOMIC DNA]</scope>
    <source>
        <strain>MIT 9215</strain>
    </source>
</reference>
<proteinExistence type="inferred from homology"/>
<feature type="chain" id="PRO_1000061232" description="Phosphoenolpyruvate carboxylase">
    <location>
        <begin position="1"/>
        <end position="989"/>
    </location>
</feature>
<feature type="active site" evidence="1">
    <location>
        <position position="175"/>
    </location>
</feature>
<feature type="active site" evidence="1">
    <location>
        <position position="630"/>
    </location>
</feature>
<organism>
    <name type="scientific">Prochlorococcus marinus (strain MIT 9215)</name>
    <dbReference type="NCBI Taxonomy" id="93060"/>
    <lineage>
        <taxon>Bacteria</taxon>
        <taxon>Bacillati</taxon>
        <taxon>Cyanobacteriota</taxon>
        <taxon>Cyanophyceae</taxon>
        <taxon>Synechococcales</taxon>
        <taxon>Prochlorococcaceae</taxon>
        <taxon>Prochlorococcus</taxon>
    </lineage>
</organism>
<sequence length="989" mass="114465">MESFRQIKNNNVDLISNNDPLDKNRLLIEDLWESVLREECPDDQAERLIQLKELSYSKQMNGDSSKTFKNEIVDIVNSMDLAESIAAARAFSLYFQLVNILEQRVEEDRYIQSFTNKDVQKSHDNLDPFAPALARQNAPVTFRELFYRLRKLNVPPGKLEELLQEMDIRLVFTAHPTEIVRHTIRHKQTRVANLLKKIQIEQFLTKEEKNSLKNQLKEEVRLWWRTDELHQFKPSVLDEVDYALHYFQQVLFNAMPQLRGRIAEALTENYPDVQLPSQSFCNFGSWVGSDRDGNPSVTPEITWRTACYQRQLMLERYIIATSNLRDQLSVSMQWSQVSSSLLESLETDRVKFPEIYEARATRYRSEPYRLKLSYILEKLRLTQERNNLLSDNGWKFDLEGEIDNKNLDKVENLYYKSVNEFTYDLELIKNSLISTGLTCESVNTLLTQVHIFGFSLASLDIRQESTRHSDAIQELTNYLDLTMKYDQMSEEEKIKWLIDELNTKRPLIPSDVNWTKTTEETFSVFKMVKRLQQEFGSRICHSYVISMSHSASDLLEVLLLAKEMGLLDQNSQKSKLLVVPLFETVEDLKRAPEVMERLFKLDFYRSLLPKVGESFKPLQELMLGYSDSNKDSGFVSSNWEIHRAQIALQNLSSRNNILLRLFHGRGGSVGRGGGPAYQAILAQPSGTLKGRIKITEQGEVLASKYSLPELALYNLETVTTAVIQNSLVNNRLDATPEWNQLMSRLAETSRSHYRKLVHENPDLLNFFQEVTPIEEISKLQISSRPARRKKGAKDLSSLRAIPWVFGWTQSRFLLPSWFGVGTALSSELNSDPRQIELLRVLHQRWPFFRMLISKVEMTLSKVDLEVARYYVDTLGSRENKDSFDDIFEVISKEYNLTKSLILEITGKNKLLESDRDLKLSVSLRNKTIIPLGFLQVSLLRRLRDQTRQPPISEFIIDKDESRRAYSRSELLRGALLTINGIAAGMRNTG</sequence>
<keyword id="KW-0120">Carbon dioxide fixation</keyword>
<keyword id="KW-0456">Lyase</keyword>
<keyword id="KW-0460">Magnesium</keyword>
<dbReference type="EC" id="4.1.1.31" evidence="1"/>
<dbReference type="EMBL" id="CP000825">
    <property type="protein sequence ID" value="ABV51460.1"/>
    <property type="molecule type" value="Genomic_DNA"/>
</dbReference>
<dbReference type="RefSeq" id="WP_012008463.1">
    <property type="nucleotide sequence ID" value="NC_009840.1"/>
</dbReference>
<dbReference type="SMR" id="A8G779"/>
<dbReference type="STRING" id="93060.P9215_18471"/>
<dbReference type="KEGG" id="pmh:P9215_18471"/>
<dbReference type="eggNOG" id="COG2352">
    <property type="taxonomic scope" value="Bacteria"/>
</dbReference>
<dbReference type="HOGENOM" id="CLU_006557_2_0_3"/>
<dbReference type="OrthoDB" id="9768133at2"/>
<dbReference type="Proteomes" id="UP000002014">
    <property type="component" value="Chromosome"/>
</dbReference>
<dbReference type="GO" id="GO:0005829">
    <property type="term" value="C:cytosol"/>
    <property type="evidence" value="ECO:0007669"/>
    <property type="project" value="TreeGrafter"/>
</dbReference>
<dbReference type="GO" id="GO:0000287">
    <property type="term" value="F:magnesium ion binding"/>
    <property type="evidence" value="ECO:0007669"/>
    <property type="project" value="UniProtKB-UniRule"/>
</dbReference>
<dbReference type="GO" id="GO:0008964">
    <property type="term" value="F:phosphoenolpyruvate carboxylase activity"/>
    <property type="evidence" value="ECO:0007669"/>
    <property type="project" value="UniProtKB-UniRule"/>
</dbReference>
<dbReference type="GO" id="GO:0015977">
    <property type="term" value="P:carbon fixation"/>
    <property type="evidence" value="ECO:0007669"/>
    <property type="project" value="UniProtKB-UniRule"/>
</dbReference>
<dbReference type="GO" id="GO:0006107">
    <property type="term" value="P:oxaloacetate metabolic process"/>
    <property type="evidence" value="ECO:0007669"/>
    <property type="project" value="UniProtKB-UniRule"/>
</dbReference>
<dbReference type="GO" id="GO:0006099">
    <property type="term" value="P:tricarboxylic acid cycle"/>
    <property type="evidence" value="ECO:0007669"/>
    <property type="project" value="InterPro"/>
</dbReference>
<dbReference type="Gene3D" id="1.20.1440.90">
    <property type="entry name" value="Phosphoenolpyruvate/pyruvate domain"/>
    <property type="match status" value="1"/>
</dbReference>
<dbReference type="HAMAP" id="MF_00595">
    <property type="entry name" value="PEPcase_type1"/>
    <property type="match status" value="1"/>
</dbReference>
<dbReference type="InterPro" id="IPR021135">
    <property type="entry name" value="PEP_COase"/>
</dbReference>
<dbReference type="InterPro" id="IPR022805">
    <property type="entry name" value="PEP_COase_bac/pln-type"/>
</dbReference>
<dbReference type="InterPro" id="IPR018129">
    <property type="entry name" value="PEP_COase_Lys_AS"/>
</dbReference>
<dbReference type="InterPro" id="IPR033129">
    <property type="entry name" value="PEPCASE_His_AS"/>
</dbReference>
<dbReference type="InterPro" id="IPR015813">
    <property type="entry name" value="Pyrv/PenolPyrv_kinase-like_dom"/>
</dbReference>
<dbReference type="NCBIfam" id="NF000584">
    <property type="entry name" value="PRK00009.1"/>
    <property type="match status" value="1"/>
</dbReference>
<dbReference type="PANTHER" id="PTHR30523">
    <property type="entry name" value="PHOSPHOENOLPYRUVATE CARBOXYLASE"/>
    <property type="match status" value="1"/>
</dbReference>
<dbReference type="PANTHER" id="PTHR30523:SF6">
    <property type="entry name" value="PHOSPHOENOLPYRUVATE CARBOXYLASE"/>
    <property type="match status" value="1"/>
</dbReference>
<dbReference type="Pfam" id="PF00311">
    <property type="entry name" value="PEPcase"/>
    <property type="match status" value="1"/>
</dbReference>
<dbReference type="PRINTS" id="PR00150">
    <property type="entry name" value="PEPCARBXLASE"/>
</dbReference>
<dbReference type="SUPFAM" id="SSF51621">
    <property type="entry name" value="Phosphoenolpyruvate/pyruvate domain"/>
    <property type="match status" value="1"/>
</dbReference>
<dbReference type="PROSITE" id="PS00781">
    <property type="entry name" value="PEPCASE_1"/>
    <property type="match status" value="1"/>
</dbReference>
<dbReference type="PROSITE" id="PS00393">
    <property type="entry name" value="PEPCASE_2"/>
    <property type="match status" value="1"/>
</dbReference>
<gene>
    <name evidence="1" type="primary">ppc</name>
    <name type="ordered locus">P9215_18471</name>
</gene>
<accession>A8G779</accession>
<name>CAPP_PROM2</name>